<organism evidence="10">
    <name type="scientific">Aspergillus fumigatus (strain ATCC MYA-4609 / CBS 101355 / FGSC A1100 / Af293)</name>
    <name type="common">Neosartorya fumigata</name>
    <dbReference type="NCBI Taxonomy" id="330879"/>
    <lineage>
        <taxon>Eukaryota</taxon>
        <taxon>Fungi</taxon>
        <taxon>Dikarya</taxon>
        <taxon>Ascomycota</taxon>
        <taxon>Pezizomycotina</taxon>
        <taxon>Eurotiomycetes</taxon>
        <taxon>Eurotiomycetidae</taxon>
        <taxon>Eurotiales</taxon>
        <taxon>Aspergillaceae</taxon>
        <taxon>Aspergillus</taxon>
        <taxon>Aspergillus subgen. Fumigati</taxon>
    </lineage>
</organism>
<evidence type="ECO:0000250" key="1">
    <source>
        <dbReference type="UniProtKB" id="Q92410"/>
    </source>
</evidence>
<evidence type="ECO:0000255" key="2">
    <source>
        <dbReference type="RuleBase" id="RU362045"/>
    </source>
</evidence>
<evidence type="ECO:0000256" key="3">
    <source>
        <dbReference type="SAM" id="MobiDB-lite"/>
    </source>
</evidence>
<evidence type="ECO:0000269" key="4">
    <source>
    </source>
</evidence>
<evidence type="ECO:0000269" key="5">
    <source>
    </source>
</evidence>
<evidence type="ECO:0000303" key="6">
    <source>
    </source>
</evidence>
<evidence type="ECO:0000305" key="7"/>
<evidence type="ECO:0000305" key="8">
    <source>
    </source>
</evidence>
<evidence type="ECO:0000312" key="9">
    <source>
        <dbReference type="EMBL" id="EAL89135.1"/>
    </source>
</evidence>
<evidence type="ECO:0000312" key="10">
    <source>
        <dbReference type="Proteomes" id="UP000002530"/>
    </source>
</evidence>
<evidence type="ECO:0007744" key="11">
    <source>
        <dbReference type="PDB" id="5HVM"/>
    </source>
</evidence>
<evidence type="ECO:0007829" key="12">
    <source>
        <dbReference type="PDB" id="5HVM"/>
    </source>
</evidence>
<accession>Q4WLM9</accession>
<dbReference type="EC" id="2.4.1.15" evidence="8"/>
<dbReference type="EMBL" id="AAHF01000006">
    <property type="protein sequence ID" value="EAL89135.1"/>
    <property type="molecule type" value="Genomic_DNA"/>
</dbReference>
<dbReference type="RefSeq" id="XP_751173.1">
    <property type="nucleotide sequence ID" value="XM_746080.1"/>
</dbReference>
<dbReference type="PDB" id="5HVM">
    <property type="method" value="X-ray"/>
    <property type="resolution" value="2.81 A"/>
    <property type="chains" value="A/B=1-515"/>
</dbReference>
<dbReference type="PDBsum" id="5HVM"/>
<dbReference type="SMR" id="Q4WLM9"/>
<dbReference type="FunCoup" id="Q4WLM9">
    <property type="interactions" value="580"/>
</dbReference>
<dbReference type="STRING" id="330879.Q4WLM9"/>
<dbReference type="EnsemblFungi" id="EAL89135">
    <property type="protein sequence ID" value="EAL89135"/>
    <property type="gene ID" value="AFUA_6G12950"/>
</dbReference>
<dbReference type="GeneID" id="3508480"/>
<dbReference type="KEGG" id="afm:AFUA_6G12950"/>
<dbReference type="VEuPathDB" id="FungiDB:Afu6g12950"/>
<dbReference type="eggNOG" id="KOG1050">
    <property type="taxonomic scope" value="Eukaryota"/>
</dbReference>
<dbReference type="HOGENOM" id="CLU_002351_7_2_1"/>
<dbReference type="InParanoid" id="Q4WLM9"/>
<dbReference type="OMA" id="NRTIWPL"/>
<dbReference type="OrthoDB" id="755951at2759"/>
<dbReference type="BRENDA" id="2.4.1.15">
    <property type="organism ID" value="508"/>
</dbReference>
<dbReference type="Proteomes" id="UP000002530">
    <property type="component" value="Chromosome 6"/>
</dbReference>
<dbReference type="GO" id="GO:0005946">
    <property type="term" value="C:alpha,alpha-trehalose-phosphate synthase complex (UDP-forming)"/>
    <property type="evidence" value="ECO:0000318"/>
    <property type="project" value="GO_Central"/>
</dbReference>
<dbReference type="GO" id="GO:0003825">
    <property type="term" value="F:alpha,alpha-trehalose-phosphate synthase (UDP-forming) activity"/>
    <property type="evidence" value="ECO:0000318"/>
    <property type="project" value="GO_Central"/>
</dbReference>
<dbReference type="GO" id="GO:0000166">
    <property type="term" value="F:nucleotide binding"/>
    <property type="evidence" value="ECO:0007669"/>
    <property type="project" value="UniProtKB-KW"/>
</dbReference>
<dbReference type="GO" id="GO:0102986">
    <property type="term" value="F:trehalose synthase activity"/>
    <property type="evidence" value="ECO:0000315"/>
    <property type="project" value="UniProtKB"/>
</dbReference>
<dbReference type="GO" id="GO:0005975">
    <property type="term" value="P:carbohydrate metabolic process"/>
    <property type="evidence" value="ECO:0000315"/>
    <property type="project" value="AspGD"/>
</dbReference>
<dbReference type="GO" id="GO:0034605">
    <property type="term" value="P:cellular response to heat"/>
    <property type="evidence" value="ECO:0000318"/>
    <property type="project" value="GO_Central"/>
</dbReference>
<dbReference type="GO" id="GO:0005992">
    <property type="term" value="P:trehalose biosynthetic process"/>
    <property type="evidence" value="ECO:0000315"/>
    <property type="project" value="AspGD"/>
</dbReference>
<dbReference type="CDD" id="cd03788">
    <property type="entry name" value="GT20_TPS"/>
    <property type="match status" value="1"/>
</dbReference>
<dbReference type="FunFam" id="3.40.50.2000:FF:000007">
    <property type="entry name" value="Trehalose-6-phosphate synthase"/>
    <property type="match status" value="1"/>
</dbReference>
<dbReference type="FunFam" id="3.40.50.2000:FF:000035">
    <property type="entry name" value="Trehalose-6-phosphate synthase"/>
    <property type="match status" value="1"/>
</dbReference>
<dbReference type="Gene3D" id="3.40.50.2000">
    <property type="entry name" value="Glycogen Phosphorylase B"/>
    <property type="match status" value="2"/>
</dbReference>
<dbReference type="InterPro" id="IPR001830">
    <property type="entry name" value="Glyco_trans_20"/>
</dbReference>
<dbReference type="InterPro" id="IPR012766">
    <property type="entry name" value="Trehalose_OtsA"/>
</dbReference>
<dbReference type="NCBIfam" id="TIGR02400">
    <property type="entry name" value="trehalose_OtsA"/>
    <property type="match status" value="1"/>
</dbReference>
<dbReference type="PANTHER" id="PTHR10788:SF106">
    <property type="entry name" value="BCDNA.GH08860"/>
    <property type="match status" value="1"/>
</dbReference>
<dbReference type="PANTHER" id="PTHR10788">
    <property type="entry name" value="TREHALOSE-6-PHOSPHATE SYNTHASE"/>
    <property type="match status" value="1"/>
</dbReference>
<dbReference type="Pfam" id="PF00982">
    <property type="entry name" value="Glyco_transf_20"/>
    <property type="match status" value="1"/>
</dbReference>
<dbReference type="SUPFAM" id="SSF53756">
    <property type="entry name" value="UDP-Glycosyltransferase/glycogen phosphorylase"/>
    <property type="match status" value="1"/>
</dbReference>
<keyword id="KW-0002">3D-structure</keyword>
<keyword id="KW-0175">Coiled coil</keyword>
<keyword id="KW-0328">Glycosyltransferase</keyword>
<keyword id="KW-0547">Nucleotide-binding</keyword>
<keyword id="KW-1185">Reference proteome</keyword>
<keyword id="KW-0808">Transferase</keyword>
<protein>
    <recommendedName>
        <fullName evidence="7">Alpha,alpha-trehalose-phosphate synthase [UDP-forming] 1</fullName>
        <ecNumber evidence="8">2.4.1.15</ecNumber>
    </recommendedName>
    <alternativeName>
        <fullName evidence="2">UDP-glucose-glucosephosphate glucosyltransferase</fullName>
    </alternativeName>
</protein>
<reference evidence="10" key="1">
    <citation type="journal article" date="2005" name="Nature">
        <title>Genomic sequence of the pathogenic and allergenic filamentous fungus Aspergillus fumigatus.</title>
        <authorList>
            <person name="Nierman W.C."/>
            <person name="Pain A."/>
            <person name="Anderson M.J."/>
            <person name="Wortman J.R."/>
            <person name="Kim H.S."/>
            <person name="Arroyo J."/>
            <person name="Berriman M."/>
            <person name="Abe K."/>
            <person name="Archer D.B."/>
            <person name="Bermejo C."/>
            <person name="Bennett J.W."/>
            <person name="Bowyer P."/>
            <person name="Chen D."/>
            <person name="Collins M."/>
            <person name="Coulsen R."/>
            <person name="Davies R."/>
            <person name="Dyer P.S."/>
            <person name="Farman M.L."/>
            <person name="Fedorova N."/>
            <person name="Fedorova N.D."/>
            <person name="Feldblyum T.V."/>
            <person name="Fischer R."/>
            <person name="Fosker N."/>
            <person name="Fraser A."/>
            <person name="Garcia J.L."/>
            <person name="Garcia M.J."/>
            <person name="Goble A."/>
            <person name="Goldman G.H."/>
            <person name="Gomi K."/>
            <person name="Griffith-Jones S."/>
            <person name="Gwilliam R."/>
            <person name="Haas B.J."/>
            <person name="Haas H."/>
            <person name="Harris D.E."/>
            <person name="Horiuchi H."/>
            <person name="Huang J."/>
            <person name="Humphray S."/>
            <person name="Jimenez J."/>
            <person name="Keller N."/>
            <person name="Khouri H."/>
            <person name="Kitamoto K."/>
            <person name="Kobayashi T."/>
            <person name="Konzack S."/>
            <person name="Kulkarni R."/>
            <person name="Kumagai T."/>
            <person name="Lafton A."/>
            <person name="Latge J.-P."/>
            <person name="Li W."/>
            <person name="Lord A."/>
            <person name="Lu C."/>
            <person name="Majoros W.H."/>
            <person name="May G.S."/>
            <person name="Miller B.L."/>
            <person name="Mohamoud Y."/>
            <person name="Molina M."/>
            <person name="Monod M."/>
            <person name="Mouyna I."/>
            <person name="Mulligan S."/>
            <person name="Murphy L.D."/>
            <person name="O'Neil S."/>
            <person name="Paulsen I."/>
            <person name="Penalva M.A."/>
            <person name="Pertea M."/>
            <person name="Price C."/>
            <person name="Pritchard B.L."/>
            <person name="Quail M.A."/>
            <person name="Rabbinowitsch E."/>
            <person name="Rawlins N."/>
            <person name="Rajandream M.A."/>
            <person name="Reichard U."/>
            <person name="Renauld H."/>
            <person name="Robson G.D."/>
            <person name="Rodriguez de Cordoba S."/>
            <person name="Rodriguez-Pena J.M."/>
            <person name="Ronning C.M."/>
            <person name="Rutter S."/>
            <person name="Salzberg S.L."/>
            <person name="Sanchez M."/>
            <person name="Sanchez-Ferrero J.C."/>
            <person name="Saunders D."/>
            <person name="Seeger K."/>
            <person name="Squares R."/>
            <person name="Squares S."/>
            <person name="Takeuchi M."/>
            <person name="Tekaia F."/>
            <person name="Turner G."/>
            <person name="Vazquez de Aldana C.R."/>
            <person name="Weidman J."/>
            <person name="White O."/>
            <person name="Woodward J.R."/>
            <person name="Yu J.-H."/>
            <person name="Fraser C.M."/>
            <person name="Galagan J.E."/>
            <person name="Asai K."/>
            <person name="Machida M."/>
            <person name="Hall N."/>
            <person name="Barrell B.G."/>
            <person name="Denning D.W."/>
        </authorList>
    </citation>
    <scope>NUCLEOTIDE SEQUENCE [LARGE SCALE GENOMIC DNA]</scope>
    <source>
        <strain>ATCC MYA-4609 / CBS 101355 / FGSC A1100 / Af293</strain>
    </source>
</reference>
<reference evidence="7" key="2">
    <citation type="journal article" date="2010" name="Infect. Immun.">
        <title>Role of trehalose biosynthesis in Aspergillus fumigatus development, stress response, and virulence.</title>
        <authorList>
            <person name="Al-Bader N."/>
            <person name="Vanier G."/>
            <person name="Liu H."/>
            <person name="Gravelat F.N."/>
            <person name="Urb M."/>
            <person name="Hoareau C.M."/>
            <person name="Campoli P."/>
            <person name="Chabot J."/>
            <person name="Filler S.G."/>
            <person name="Sheppard D.C."/>
        </authorList>
    </citation>
    <scope>FUNCTION</scope>
    <scope>CATALYTIC ACTIVITY</scope>
    <scope>DEVELOPMENTAL STAGE</scope>
    <scope>DISRUPTION PHENOTYPE</scope>
</reference>
<reference evidence="11" key="3">
    <citation type="journal article" date="2017" name="MBio">
        <title>Structural and In Vivo Studies on Trehalose-6-Phosphate Synthase from Pathogenic Fungi Provide Insights into Its Catalytic Mechanism, Biological Necessity, and Potential for Novel Antifungal Drug Design.</title>
        <authorList>
            <person name="Miao Y."/>
            <person name="Tenor J.L."/>
            <person name="Toffaletti D.L."/>
            <person name="Maskarinec S.A."/>
            <person name="Liu J."/>
            <person name="Lee R.E."/>
            <person name="Perfect J.R."/>
            <person name="Brennan R.G."/>
        </authorList>
    </citation>
    <scope>X-RAY CRYSTALLOGRAPHY (2.81 ANGSTROMS) IN COMPLEX WITH UDP AND INHIBITOR</scope>
</reference>
<gene>
    <name evidence="6" type="primary">tpsA</name>
    <name evidence="9" type="ORF">AFUA_6G12950</name>
</gene>
<feature type="chain" id="PRO_0000453073" description="Alpha,alpha-trehalose-phosphate synthase [UDP-forming] 1">
    <location>
        <begin position="1"/>
        <end position="515"/>
    </location>
</feature>
<feature type="region of interest" description="Disordered" evidence="3">
    <location>
        <begin position="483"/>
        <end position="515"/>
    </location>
</feature>
<feature type="compositionally biased region" description="Basic and acidic residues" evidence="3">
    <location>
        <begin position="491"/>
        <end position="500"/>
    </location>
</feature>
<feature type="binding site" evidence="1">
    <location>
        <position position="97"/>
    </location>
    <ligand>
        <name>D-glucose 6-phosphate</name>
        <dbReference type="ChEBI" id="CHEBI:61548"/>
    </ligand>
</feature>
<feature type="binding site" evidence="1">
    <location>
        <position position="151"/>
    </location>
    <ligand>
        <name>D-glucose 6-phosphate</name>
        <dbReference type="ChEBI" id="CHEBI:61548"/>
    </ligand>
</feature>
<feature type="binding site" evidence="5 11">
    <location>
        <position position="287"/>
    </location>
    <ligand>
        <name>UDP</name>
        <dbReference type="ChEBI" id="CHEBI:58223"/>
    </ligand>
</feature>
<feature type="binding site" evidence="1">
    <location>
        <position position="287"/>
    </location>
    <ligand>
        <name>UDP-alpha-D-glucose</name>
        <dbReference type="ChEBI" id="CHEBI:58885"/>
    </ligand>
</feature>
<feature type="binding site" evidence="5 11">
    <location>
        <position position="292"/>
    </location>
    <ligand>
        <name>UDP</name>
        <dbReference type="ChEBI" id="CHEBI:58223"/>
    </ligand>
</feature>
<feature type="binding site" evidence="1">
    <location>
        <position position="292"/>
    </location>
    <ligand>
        <name>UDP-alpha-D-glucose</name>
        <dbReference type="ChEBI" id="CHEBI:58885"/>
    </ligand>
</feature>
<feature type="binding site" evidence="1">
    <location>
        <position position="325"/>
    </location>
    <ligand>
        <name>D-glucose 6-phosphate</name>
        <dbReference type="ChEBI" id="CHEBI:61548"/>
    </ligand>
</feature>
<feature type="binding site" evidence="5 11">
    <location>
        <position position="364"/>
    </location>
    <ligand>
        <name>UDP</name>
        <dbReference type="ChEBI" id="CHEBI:58223"/>
    </ligand>
</feature>
<feature type="binding site" evidence="1">
    <location>
        <begin position="386"/>
        <end position="394"/>
    </location>
    <ligand>
        <name>UDP-alpha-D-glucose</name>
        <dbReference type="ChEBI" id="CHEBI:58885"/>
    </ligand>
</feature>
<feature type="binding site" evidence="5 11">
    <location>
        <begin position="390"/>
        <end position="394"/>
    </location>
    <ligand>
        <name>UDP</name>
        <dbReference type="ChEBI" id="CHEBI:58223"/>
    </ligand>
</feature>
<feature type="strand" evidence="12">
    <location>
        <begin position="14"/>
        <end position="20"/>
    </location>
</feature>
<feature type="strand" evidence="12">
    <location>
        <begin position="26"/>
        <end position="28"/>
    </location>
</feature>
<feature type="strand" evidence="12">
    <location>
        <begin position="56"/>
        <end position="60"/>
    </location>
</feature>
<feature type="helix" evidence="12">
    <location>
        <begin position="72"/>
        <end position="80"/>
    </location>
</feature>
<feature type="strand" evidence="12">
    <location>
        <begin position="83"/>
        <end position="85"/>
    </location>
</feature>
<feature type="helix" evidence="12">
    <location>
        <begin position="90"/>
        <end position="97"/>
    </location>
</feature>
<feature type="helix" evidence="12">
    <location>
        <begin position="98"/>
        <end position="104"/>
    </location>
</feature>
<feature type="helix" evidence="12">
    <location>
        <begin position="105"/>
        <end position="109"/>
    </location>
</feature>
<feature type="helix" evidence="12">
    <location>
        <begin position="113"/>
        <end position="115"/>
    </location>
</feature>
<feature type="helix" evidence="12">
    <location>
        <begin position="120"/>
        <end position="140"/>
    </location>
</feature>
<feature type="strand" evidence="12">
    <location>
        <begin position="146"/>
        <end position="151"/>
    </location>
</feature>
<feature type="helix" evidence="12">
    <location>
        <begin position="152"/>
        <end position="154"/>
    </location>
</feature>
<feature type="helix" evidence="12">
    <location>
        <begin position="157"/>
        <end position="165"/>
    </location>
</feature>
<feature type="strand" evidence="12">
    <location>
        <begin position="168"/>
        <end position="171"/>
    </location>
</feature>
<feature type="strand" evidence="12">
    <location>
        <begin position="173"/>
        <end position="177"/>
    </location>
</feature>
<feature type="helix" evidence="12">
    <location>
        <begin position="185"/>
        <end position="188"/>
    </location>
</feature>
<feature type="helix" evidence="12">
    <location>
        <begin position="194"/>
        <end position="201"/>
    </location>
</feature>
<feature type="strand" evidence="12">
    <location>
        <begin position="204"/>
        <end position="211"/>
    </location>
</feature>
<feature type="helix" evidence="12">
    <location>
        <begin position="212"/>
        <end position="225"/>
    </location>
</feature>
<feature type="strand" evidence="12">
    <location>
        <begin position="234"/>
        <end position="237"/>
    </location>
</feature>
<feature type="strand" evidence="12">
    <location>
        <begin position="240"/>
        <end position="246"/>
    </location>
</feature>
<feature type="helix" evidence="12">
    <location>
        <begin position="253"/>
        <end position="259"/>
    </location>
</feature>
<feature type="helix" evidence="12">
    <location>
        <begin position="263"/>
        <end position="275"/>
    </location>
</feature>
<feature type="turn" evidence="12">
    <location>
        <begin position="276"/>
        <end position="278"/>
    </location>
</feature>
<feature type="strand" evidence="12">
    <location>
        <begin position="279"/>
        <end position="288"/>
    </location>
</feature>
<feature type="helix" evidence="12">
    <location>
        <begin position="290"/>
        <end position="292"/>
    </location>
</feature>
<feature type="helix" evidence="12">
    <location>
        <begin position="294"/>
        <end position="307"/>
    </location>
</feature>
<feature type="helix" evidence="12">
    <location>
        <begin position="309"/>
        <end position="311"/>
    </location>
</feature>
<feature type="turn" evidence="12">
    <location>
        <begin position="312"/>
        <end position="314"/>
    </location>
</feature>
<feature type="strand" evidence="12">
    <location>
        <begin position="315"/>
        <end position="322"/>
    </location>
</feature>
<feature type="helix" evidence="12">
    <location>
        <begin position="329"/>
        <end position="349"/>
    </location>
</feature>
<feature type="strand" evidence="12">
    <location>
        <begin position="356"/>
        <end position="360"/>
    </location>
</feature>
<feature type="helix" evidence="12">
    <location>
        <begin position="366"/>
        <end position="375"/>
    </location>
</feature>
<feature type="strand" evidence="12">
    <location>
        <begin position="377"/>
        <end position="381"/>
    </location>
</feature>
<feature type="strand" evidence="12">
    <location>
        <begin position="384"/>
        <end position="387"/>
    </location>
</feature>
<feature type="helix" evidence="12">
    <location>
        <begin position="391"/>
        <end position="397"/>
    </location>
</feature>
<feature type="turn" evidence="12">
    <location>
        <begin position="400"/>
        <end position="402"/>
    </location>
</feature>
<feature type="strand" evidence="12">
    <location>
        <begin position="405"/>
        <end position="409"/>
    </location>
</feature>
<feature type="helix" evidence="12">
    <location>
        <begin position="414"/>
        <end position="417"/>
    </location>
</feature>
<feature type="strand" evidence="12">
    <location>
        <begin position="421"/>
        <end position="424"/>
    </location>
</feature>
<feature type="helix" evidence="12">
    <location>
        <begin position="429"/>
        <end position="441"/>
    </location>
</feature>
<feature type="helix" evidence="12">
    <location>
        <begin position="444"/>
        <end position="460"/>
    </location>
</feature>
<feature type="helix" evidence="12">
    <location>
        <begin position="463"/>
        <end position="478"/>
    </location>
</feature>
<sequence>MPSLENSTQNEARLLLVSNRLPITIKRSEDGKYDFSMSSGGLVSGLSGLSKSTTFQWYGWPGLEVPEEEIPVVKQRLKDEYGAIPVFIDDELADRHYNGFSNSILWPLFHYHPGEITFDESAWEAYKEANRLFAKAVAKEVQDGDLIWVHDYHLMLLPEMLREEIGDSKENVKIGFFLHTPFPSSEIYRILPVRNELLLGVLHCDLIGFHTYDYTRHFLSACSRLLGLATTPNGIEFQGKVIACGAFPIGIDPEKFQEGLKKEKVQKRIAQLEQKFQGVKLMVGVDRLDYIKGVPQKLHALEVFLSDHPEWVGKVVLVQVAVPSRQDVEEYQNLRAVVNELVGRINGKFGTVEFMPIHFLHKSVNFDELIALYAVSDACIVSSTRDGMNLVAYEYIASQQKRHGVLVLSEFAGAAQSLNGSIIINPWNTEELAGAYQEAVTMSDEQRALNFSKLDKYVNKYTSAFWGQSFVTELNRISAHSAGKFQSRKAKLPESADAEKPMNGSGESEESQTTQ</sequence>
<comment type="function">
    <text evidence="4">Synthase catalytic subunit of the trehalose synthase complex that catalyzes the production of trehalose from glucose-6-phosphate and UDP-alpha-D-glucose in a two step process (PubMed:20439478). The disaccharide trehalose serves as a storage carbohydrate that is mobilized during conidial germination (PubMed:20439478). Regulates the level of trehalose as a protectant for cell integrity during thermal and oxidative stress (PubMed:20439478).</text>
</comment>
<comment type="catalytic activity">
    <reaction evidence="8">
        <text>D-glucose 6-phosphate + UDP-alpha-D-glucose = alpha,alpha-trehalose 6-phosphate + UDP + H(+)</text>
        <dbReference type="Rhea" id="RHEA:18889"/>
        <dbReference type="ChEBI" id="CHEBI:15378"/>
        <dbReference type="ChEBI" id="CHEBI:58223"/>
        <dbReference type="ChEBI" id="CHEBI:58429"/>
        <dbReference type="ChEBI" id="CHEBI:58885"/>
        <dbReference type="ChEBI" id="CHEBI:61548"/>
        <dbReference type="EC" id="2.4.1.15"/>
    </reaction>
</comment>
<comment type="pathway">
    <text evidence="7">Carbohydrate biosynthesis.</text>
</comment>
<comment type="developmental stage">
    <text evidence="4">Increases during conidiation.</text>
</comment>
<comment type="disruption phenotype">
    <text evidence="4">Simultaneous disruption of tpsB abolishes trehalose biosynthesis during hyphal and conidia formation, and delays germination (PubMed:20439478). Simultaneous disruption of tpsB results in abnormal cell wall formation, sensitivity to caspofungin, calcofluor white, thermal stress and oxidative stress, and hypervirulence in a mouse model of aspergillosis (PubMed:20439478).</text>
</comment>
<comment type="similarity">
    <text evidence="7">Belongs to the glycosyltransferase 20 family.</text>
</comment>
<proteinExistence type="evidence at protein level"/>
<name>TPS1A_ASPFU</name>